<comment type="function">
    <text evidence="1">Na(+)/H(+) antiporter that extrudes sodium in exchange for external protons.</text>
</comment>
<comment type="catalytic activity">
    <reaction evidence="1">
        <text>Na(+)(in) + 2 H(+)(out) = Na(+)(out) + 2 H(+)(in)</text>
        <dbReference type="Rhea" id="RHEA:29251"/>
        <dbReference type="ChEBI" id="CHEBI:15378"/>
        <dbReference type="ChEBI" id="CHEBI:29101"/>
    </reaction>
    <physiologicalReaction direction="left-to-right" evidence="1">
        <dbReference type="Rhea" id="RHEA:29252"/>
    </physiologicalReaction>
</comment>
<comment type="subcellular location">
    <subcellularLocation>
        <location evidence="1">Cell membrane</location>
        <topology evidence="1">Multi-pass membrane protein</topology>
    </subcellularLocation>
</comment>
<comment type="similarity">
    <text evidence="1">Belongs to the NhaA Na(+)/H(+) (TC 2.A.33) antiporter family.</text>
</comment>
<name>NHAA_BIFBU</name>
<dbReference type="EMBL" id="AY955251">
    <property type="protein sequence ID" value="AAY29675.1"/>
    <property type="molecule type" value="Genomic_DNA"/>
</dbReference>
<dbReference type="EMBL" id="CP000303">
    <property type="protein sequence ID" value="ABE95483.1"/>
    <property type="molecule type" value="Genomic_DNA"/>
</dbReference>
<dbReference type="RefSeq" id="WP_015438691.1">
    <property type="nucleotide sequence ID" value="NC_020517.1"/>
</dbReference>
<dbReference type="SMR" id="Q2VPW7"/>
<dbReference type="KEGG" id="bbru:Bbr_0798"/>
<dbReference type="PATRIC" id="fig|326426.4.peg.865"/>
<dbReference type="eggNOG" id="COG3004">
    <property type="taxonomic scope" value="Bacteria"/>
</dbReference>
<dbReference type="HOGENOM" id="CLU_015803_0_0_11"/>
<dbReference type="GO" id="GO:0005886">
    <property type="term" value="C:plasma membrane"/>
    <property type="evidence" value="ECO:0007669"/>
    <property type="project" value="UniProtKB-SubCell"/>
</dbReference>
<dbReference type="GO" id="GO:0015385">
    <property type="term" value="F:sodium:proton antiporter activity"/>
    <property type="evidence" value="ECO:0007669"/>
    <property type="project" value="TreeGrafter"/>
</dbReference>
<dbReference type="GO" id="GO:0006885">
    <property type="term" value="P:regulation of pH"/>
    <property type="evidence" value="ECO:0007669"/>
    <property type="project" value="InterPro"/>
</dbReference>
<dbReference type="Gene3D" id="1.20.1530.10">
    <property type="entry name" value="Na+/H+ antiporter like domain"/>
    <property type="match status" value="1"/>
</dbReference>
<dbReference type="HAMAP" id="MF_01844">
    <property type="entry name" value="NhaA"/>
    <property type="match status" value="1"/>
</dbReference>
<dbReference type="InterPro" id="IPR023171">
    <property type="entry name" value="Na/H_antiporter_dom_sf"/>
</dbReference>
<dbReference type="InterPro" id="IPR004670">
    <property type="entry name" value="NhaA"/>
</dbReference>
<dbReference type="PANTHER" id="PTHR30341:SF0">
    <property type="entry name" value="NA(+)_H(+) ANTIPORTER NHAA"/>
    <property type="match status" value="1"/>
</dbReference>
<dbReference type="PANTHER" id="PTHR30341">
    <property type="entry name" value="SODIUM ION/PROTON ANTIPORTER NHAA-RELATED"/>
    <property type="match status" value="1"/>
</dbReference>
<dbReference type="Pfam" id="PF06965">
    <property type="entry name" value="Na_H_antiport_1"/>
    <property type="match status" value="1"/>
</dbReference>
<evidence type="ECO:0000255" key="1">
    <source>
        <dbReference type="HAMAP-Rule" id="MF_01844"/>
    </source>
</evidence>
<proteinExistence type="inferred from homology"/>
<gene>
    <name evidence="1" type="primary">nhaA</name>
    <name type="ordered locus">Bbr_0798</name>
</gene>
<organism>
    <name type="scientific">Bifidobacterium breve (strain NCIMB 8807 / UCC2003)</name>
    <dbReference type="NCBI Taxonomy" id="326426"/>
    <lineage>
        <taxon>Bacteria</taxon>
        <taxon>Bacillati</taxon>
        <taxon>Actinomycetota</taxon>
        <taxon>Actinomycetes</taxon>
        <taxon>Bifidobacteriales</taxon>
        <taxon>Bifidobacteriaceae</taxon>
        <taxon>Bifidobacterium</taxon>
    </lineage>
</organism>
<reference key="1">
    <citation type="journal article" date="2005" name="J. Bacteriol.">
        <title>The ClgR protein regulates transcription of the clpP operon in Bifidobacterium breve UCC 2003.</title>
        <authorList>
            <person name="Ventura M."/>
            <person name="Zhang Z."/>
            <person name="Cronin M."/>
            <person name="Canchaya C."/>
            <person name="Kenny J.G."/>
            <person name="Fitzgerald G.F."/>
            <person name="van Sinderen D."/>
        </authorList>
    </citation>
    <scope>NUCLEOTIDE SEQUENCE [GENOMIC DNA]</scope>
    <source>
        <strain>NCIMB 8807 / UCC2003</strain>
    </source>
</reference>
<reference key="2">
    <citation type="journal article" date="2011" name="Proc. Natl. Acad. Sci. U.S.A.">
        <title>Functional genome analysis of Bifidobacterium breve UCC2003 reveals type IVb tight adherence (Tad) pili as an essential and conserved host-colonization factor.</title>
        <authorList>
            <person name="O'Connell Motherway M."/>
            <person name="Zomer A."/>
            <person name="Leahy S.C."/>
            <person name="Reunanen J."/>
            <person name="Bottacini F."/>
            <person name="Claesson M.J."/>
            <person name="O'Brien F."/>
            <person name="Flynn K."/>
            <person name="Casey P.G."/>
            <person name="Moreno Munoz J.A."/>
            <person name="Kearney B."/>
            <person name="Houston A.M."/>
            <person name="O'Mahony C."/>
            <person name="Higgins D.G."/>
            <person name="Shanahan F."/>
            <person name="Palva A."/>
            <person name="de Vos W.M."/>
            <person name="Fitzgerald G.F."/>
            <person name="Ventura M."/>
            <person name="O'Toole P.W."/>
            <person name="van Sinderen D."/>
        </authorList>
    </citation>
    <scope>NUCLEOTIDE SEQUENCE [LARGE SCALE GENOMIC DNA]</scope>
    <source>
        <strain>NCIMB 8807 / UCC2003</strain>
    </source>
</reference>
<sequence>MATTTGAKRGIWPMIRRIAASDRISGLIMLGFALAGLVLANLPLTAHAFEAVAETHVFIPHTNLDLPIGHWAQDGLLTIFFLTVGLELKQELTTGSLANPKAAAVPMLCAVGGMITPPILFLATTALFSQFGPGEPGSLILATTGSSIPFAEMSHGWAVPTATDIAFSLAVLALFAKALPGSIRAFLMTLATVDDLLAIILIAVFFSSVNAWYWFIGIAVCAVVWAHLVRLKKVPWIAVGVVGILAWIMMFEAGIHPTLAGVLVGLLTPARVMHGEYSPRAERYADKLKPFSALLALPIFALFATGVHFESMSPLLLLSPLVIALIVALVVGKPLGIIVTAWLATHVGGLKMAKGLRVRDMIPAAVACGIGFTVSFLIASLAYTNQELSAEARFGVLVASLIAAAISGVLLSRQSKRFEQAAAVAAAEADAESDVNTHSDELAEHSITLADGTESVEIDFRR</sequence>
<protein>
    <recommendedName>
        <fullName evidence="1">Na(+)/H(+) antiporter NhaA</fullName>
    </recommendedName>
    <alternativeName>
        <fullName evidence="1">Sodium/proton antiporter NhaA</fullName>
    </alternativeName>
</protein>
<accession>Q2VPW7</accession>
<accession>F9XYN2</accession>
<feature type="chain" id="PRO_0000334240" description="Na(+)/H(+) antiporter NhaA">
    <location>
        <begin position="1"/>
        <end position="462"/>
    </location>
</feature>
<feature type="transmembrane region" description="Helical" evidence="1">
    <location>
        <begin position="24"/>
        <end position="44"/>
    </location>
</feature>
<feature type="transmembrane region" description="Helical" evidence="1">
    <location>
        <begin position="66"/>
        <end position="86"/>
    </location>
</feature>
<feature type="transmembrane region" description="Helical" evidence="1">
    <location>
        <begin position="102"/>
        <end position="122"/>
    </location>
</feature>
<feature type="transmembrane region" description="Helical" evidence="1">
    <location>
        <begin position="156"/>
        <end position="176"/>
    </location>
</feature>
<feature type="transmembrane region" description="Helical" evidence="1">
    <location>
        <begin position="196"/>
        <end position="216"/>
    </location>
</feature>
<feature type="transmembrane region" description="Helical" evidence="1">
    <location>
        <begin position="235"/>
        <end position="255"/>
    </location>
</feature>
<feature type="transmembrane region" description="Helical" evidence="1">
    <location>
        <begin position="256"/>
        <end position="275"/>
    </location>
</feature>
<feature type="transmembrane region" description="Helical" evidence="1">
    <location>
        <begin position="290"/>
        <end position="310"/>
    </location>
</feature>
<feature type="transmembrane region" description="Helical" evidence="1">
    <location>
        <begin position="312"/>
        <end position="332"/>
    </location>
</feature>
<feature type="transmembrane region" description="Helical" evidence="1">
    <location>
        <begin position="361"/>
        <end position="381"/>
    </location>
</feature>
<feature type="transmembrane region" description="Helical" evidence="1">
    <location>
        <begin position="392"/>
        <end position="412"/>
    </location>
</feature>
<keyword id="KW-0050">Antiport</keyword>
<keyword id="KW-1003">Cell membrane</keyword>
<keyword id="KW-0406">Ion transport</keyword>
<keyword id="KW-0472">Membrane</keyword>
<keyword id="KW-0915">Sodium</keyword>
<keyword id="KW-0739">Sodium transport</keyword>
<keyword id="KW-0812">Transmembrane</keyword>
<keyword id="KW-1133">Transmembrane helix</keyword>
<keyword id="KW-0813">Transport</keyword>